<feature type="chain" id="PRO_0000213914" description="Zinc finger CCCH domain-containing protein 57">
    <location>
        <begin position="1"/>
        <end position="375"/>
    </location>
</feature>
<feature type="zinc finger region" description="C3H1-type 1" evidence="2">
    <location>
        <begin position="42"/>
        <end position="70"/>
    </location>
</feature>
<feature type="zinc finger region" description="C3H1-type 2" evidence="2">
    <location>
        <begin position="87"/>
        <end position="115"/>
    </location>
</feature>
<feature type="zinc finger region" description="C3H1-type 3" evidence="2">
    <location>
        <begin position="133"/>
        <end position="161"/>
    </location>
</feature>
<feature type="zinc finger region" description="C3H1-type 4" evidence="2">
    <location>
        <begin position="243"/>
        <end position="271"/>
    </location>
</feature>
<feature type="zinc finger region" description="C3H1-type 5" evidence="2">
    <location>
        <begin position="289"/>
        <end position="317"/>
    </location>
</feature>
<feature type="region of interest" description="Disordered" evidence="3">
    <location>
        <begin position="352"/>
        <end position="375"/>
    </location>
</feature>
<feature type="splice variant" id="VSP_037122" description="In isoform 3." evidence="4">
    <location>
        <begin position="1"/>
        <end position="21"/>
    </location>
</feature>
<feature type="splice variant" id="VSP_013558" description="In isoform 2." evidence="5">
    <location>
        <begin position="284"/>
        <end position="290"/>
    </location>
</feature>
<organism>
    <name type="scientific">Arabidopsis thaliana</name>
    <name type="common">Mouse-ear cress</name>
    <dbReference type="NCBI Taxonomy" id="3702"/>
    <lineage>
        <taxon>Eukaryota</taxon>
        <taxon>Viridiplantae</taxon>
        <taxon>Streptophyta</taxon>
        <taxon>Embryophyta</taxon>
        <taxon>Tracheophyta</taxon>
        <taxon>Spermatophyta</taxon>
        <taxon>Magnoliopsida</taxon>
        <taxon>eudicotyledons</taxon>
        <taxon>Gunneridae</taxon>
        <taxon>Pentapetalae</taxon>
        <taxon>rosids</taxon>
        <taxon>malvids</taxon>
        <taxon>Brassicales</taxon>
        <taxon>Brassicaceae</taxon>
        <taxon>Camelineae</taxon>
        <taxon>Arabidopsis</taxon>
    </lineage>
</organism>
<dbReference type="EMBL" id="AF138872">
    <property type="protein sequence ID" value="AAD27875.1"/>
    <property type="molecule type" value="mRNA"/>
</dbReference>
<dbReference type="EMBL" id="AB005242">
    <property type="protein sequence ID" value="BAB09623.1"/>
    <property type="molecule type" value="Genomic_DNA"/>
</dbReference>
<dbReference type="EMBL" id="CP002688">
    <property type="protein sequence ID" value="AED92306.1"/>
    <property type="molecule type" value="Genomic_DNA"/>
</dbReference>
<dbReference type="EMBL" id="CP002688">
    <property type="protein sequence ID" value="AED92307.1"/>
    <property type="molecule type" value="Genomic_DNA"/>
</dbReference>
<dbReference type="EMBL" id="CP002688">
    <property type="protein sequence ID" value="AED92308.1"/>
    <property type="molecule type" value="Genomic_DNA"/>
</dbReference>
<dbReference type="EMBL" id="AY084634">
    <property type="protein sequence ID" value="AAM61197.1"/>
    <property type="status" value="ALT_INIT"/>
    <property type="molecule type" value="mRNA"/>
</dbReference>
<dbReference type="EMBL" id="AY128342">
    <property type="protein sequence ID" value="AAM91545.1"/>
    <property type="molecule type" value="mRNA"/>
</dbReference>
<dbReference type="EMBL" id="BT000014">
    <property type="protein sequence ID" value="AAN15333.1"/>
    <property type="molecule type" value="mRNA"/>
</dbReference>
<dbReference type="EMBL" id="BX831982">
    <property type="status" value="NOT_ANNOTATED_CDS"/>
    <property type="molecule type" value="mRNA"/>
</dbReference>
<dbReference type="RefSeq" id="NP_568332.2">
    <molecule id="Q8L7N8-2"/>
    <property type="nucleotide sequence ID" value="NM_121660.4"/>
</dbReference>
<dbReference type="RefSeq" id="NP_851041.1">
    <molecule id="Q8L7N8-1"/>
    <property type="nucleotide sequence ID" value="NM_180710.3"/>
</dbReference>
<dbReference type="RefSeq" id="NP_974790.1">
    <molecule id="Q8L7N8-3"/>
    <property type="nucleotide sequence ID" value="NM_203061.2"/>
</dbReference>
<dbReference type="BioGRID" id="16792">
    <property type="interactions" value="2"/>
</dbReference>
<dbReference type="FunCoup" id="Q8L7N8">
    <property type="interactions" value="8"/>
</dbReference>
<dbReference type="IntAct" id="Q8L7N8">
    <property type="interactions" value="3"/>
</dbReference>
<dbReference type="STRING" id="3702.Q8L7N8"/>
<dbReference type="PaxDb" id="3702-AT5G16540.1"/>
<dbReference type="ProteomicsDB" id="240560">
    <molecule id="Q8L7N8-1"/>
</dbReference>
<dbReference type="EnsemblPlants" id="AT5G16540.1">
    <molecule id="Q8L7N8-1"/>
    <property type="protein sequence ID" value="AT5G16540.1"/>
    <property type="gene ID" value="AT5G16540"/>
</dbReference>
<dbReference type="EnsemblPlants" id="AT5G16540.2">
    <molecule id="Q8L7N8-2"/>
    <property type="protein sequence ID" value="AT5G16540.2"/>
    <property type="gene ID" value="AT5G16540"/>
</dbReference>
<dbReference type="EnsemblPlants" id="AT5G16540.3">
    <molecule id="Q8L7N8-3"/>
    <property type="protein sequence ID" value="AT5G16540.3"/>
    <property type="gene ID" value="AT5G16540"/>
</dbReference>
<dbReference type="GeneID" id="831516"/>
<dbReference type="Gramene" id="AT5G16540.1">
    <molecule id="Q8L7N8-1"/>
    <property type="protein sequence ID" value="AT5G16540.1"/>
    <property type="gene ID" value="AT5G16540"/>
</dbReference>
<dbReference type="Gramene" id="AT5G16540.2">
    <molecule id="Q8L7N8-2"/>
    <property type="protein sequence ID" value="AT5G16540.2"/>
    <property type="gene ID" value="AT5G16540"/>
</dbReference>
<dbReference type="Gramene" id="AT5G16540.3">
    <molecule id="Q8L7N8-3"/>
    <property type="protein sequence ID" value="AT5G16540.3"/>
    <property type="gene ID" value="AT5G16540"/>
</dbReference>
<dbReference type="KEGG" id="ath:AT5G16540"/>
<dbReference type="Araport" id="AT5G16540"/>
<dbReference type="TAIR" id="AT5G16540">
    <property type="gene designation" value="ZFN3"/>
</dbReference>
<dbReference type="eggNOG" id="KOG1677">
    <property type="taxonomic scope" value="Eukaryota"/>
</dbReference>
<dbReference type="InParanoid" id="Q8L7N8"/>
<dbReference type="PhylomeDB" id="Q8L7N8"/>
<dbReference type="PRO" id="PR:Q8L7N8"/>
<dbReference type="Proteomes" id="UP000006548">
    <property type="component" value="Chromosome 5"/>
</dbReference>
<dbReference type="ExpressionAtlas" id="Q8L7N8">
    <property type="expression patterns" value="baseline and differential"/>
</dbReference>
<dbReference type="GO" id="GO:0005634">
    <property type="term" value="C:nucleus"/>
    <property type="evidence" value="ECO:0007669"/>
    <property type="project" value="UniProtKB-SubCell"/>
</dbReference>
<dbReference type="GO" id="GO:0003677">
    <property type="term" value="F:DNA binding"/>
    <property type="evidence" value="ECO:0000304"/>
    <property type="project" value="TAIR"/>
</dbReference>
<dbReference type="GO" id="GO:0003729">
    <property type="term" value="F:mRNA binding"/>
    <property type="evidence" value="ECO:0000314"/>
    <property type="project" value="TAIR"/>
</dbReference>
<dbReference type="GO" id="GO:0004518">
    <property type="term" value="F:nuclease activity"/>
    <property type="evidence" value="ECO:0000304"/>
    <property type="project" value="TAIR"/>
</dbReference>
<dbReference type="GO" id="GO:0008270">
    <property type="term" value="F:zinc ion binding"/>
    <property type="evidence" value="ECO:0007669"/>
    <property type="project" value="UniProtKB-KW"/>
</dbReference>
<dbReference type="FunFam" id="4.10.1000.10:FF:000030">
    <property type="entry name" value="CCCH type zinc finger protein"/>
    <property type="match status" value="1"/>
</dbReference>
<dbReference type="FunFam" id="4.10.1000.10:FF:000028">
    <property type="entry name" value="Zinc finger nuclease 2"/>
    <property type="match status" value="1"/>
</dbReference>
<dbReference type="Gene3D" id="2.30.30.1190">
    <property type="match status" value="1"/>
</dbReference>
<dbReference type="Gene3D" id="4.10.1000.10">
    <property type="entry name" value="Zinc finger, CCCH-type"/>
    <property type="match status" value="2"/>
</dbReference>
<dbReference type="InterPro" id="IPR050974">
    <property type="entry name" value="Plant_ZF_CCCH"/>
</dbReference>
<dbReference type="InterPro" id="IPR000571">
    <property type="entry name" value="Znf_CCCH"/>
</dbReference>
<dbReference type="InterPro" id="IPR036855">
    <property type="entry name" value="Znf_CCCH_sf"/>
</dbReference>
<dbReference type="PANTHER" id="PTHR12506">
    <property type="entry name" value="PROTEIN PHOSPHATASE RELATED"/>
    <property type="match status" value="1"/>
</dbReference>
<dbReference type="PANTHER" id="PTHR12506:SF18">
    <property type="entry name" value="ZINC FINGER CCCH DOMAIN-CONTAINING PROTEIN 33-RELATED"/>
    <property type="match status" value="1"/>
</dbReference>
<dbReference type="Pfam" id="PF00642">
    <property type="entry name" value="zf-CCCH"/>
    <property type="match status" value="5"/>
</dbReference>
<dbReference type="SMART" id="SM00356">
    <property type="entry name" value="ZnF_C3H1"/>
    <property type="match status" value="5"/>
</dbReference>
<dbReference type="SUPFAM" id="SSF90229">
    <property type="entry name" value="CCCH zinc finger"/>
    <property type="match status" value="5"/>
</dbReference>
<dbReference type="PROSITE" id="PS50103">
    <property type="entry name" value="ZF_C3H1"/>
    <property type="match status" value="5"/>
</dbReference>
<protein>
    <recommendedName>
        <fullName>Zinc finger CCCH domain-containing protein 57</fullName>
        <shortName>AtC3H57</shortName>
    </recommendedName>
    <alternativeName>
        <fullName>Zinc finger type domain-containing protein ZFN3</fullName>
    </alternativeName>
</protein>
<evidence type="ECO:0000250" key="1"/>
<evidence type="ECO:0000255" key="2">
    <source>
        <dbReference type="PROSITE-ProRule" id="PRU00723"/>
    </source>
</evidence>
<evidence type="ECO:0000256" key="3">
    <source>
        <dbReference type="SAM" id="MobiDB-lite"/>
    </source>
</evidence>
<evidence type="ECO:0000303" key="4">
    <source>
    </source>
</evidence>
<evidence type="ECO:0000303" key="5">
    <source ref="1"/>
</evidence>
<evidence type="ECO:0000305" key="6"/>
<gene>
    <name type="primary">ZFN3</name>
    <name type="ordered locus">At5g16540</name>
    <name type="ORF">MQK4.29</name>
</gene>
<name>C3H57_ARATH</name>
<accession>Q8L7N8</accession>
<accession>Q27GJ0</accession>
<accession>Q8LFU7</accession>
<accession>Q9XFB9</accession>
<keyword id="KW-0025">Alternative splicing</keyword>
<keyword id="KW-0238">DNA-binding</keyword>
<keyword id="KW-0479">Metal-binding</keyword>
<keyword id="KW-0539">Nucleus</keyword>
<keyword id="KW-1185">Reference proteome</keyword>
<keyword id="KW-0677">Repeat</keyword>
<keyword id="KW-0862">Zinc</keyword>
<keyword id="KW-0863">Zinc-finger</keyword>
<reference key="1">
    <citation type="submission" date="1999-03" db="EMBL/GenBank/DDBJ databases">
        <title>Characterization of zinc finger protein 3 (ZFN-3) in Arabidopsis thaliana.</title>
        <authorList>
            <person name="Choi S."/>
            <person name="Lee J."/>
            <person name="Yi H."/>
            <person name="Shin B."/>
            <person name="Choi G."/>
        </authorList>
    </citation>
    <scope>NUCLEOTIDE SEQUENCE [MRNA] (ISOFORM 2)</scope>
    <source>
        <strain>cv. Columbia</strain>
    </source>
</reference>
<reference key="2">
    <citation type="journal article" date="1997" name="DNA Res.">
        <title>Structural analysis of Arabidopsis thaliana chromosome 5. I. Sequence features of the 1.6 Mb regions covered by twenty physically assigned P1 clones.</title>
        <authorList>
            <person name="Sato S."/>
            <person name="Kotani H."/>
            <person name="Nakamura Y."/>
            <person name="Kaneko T."/>
            <person name="Asamizu E."/>
            <person name="Fukami M."/>
            <person name="Miyajima N."/>
            <person name="Tabata S."/>
        </authorList>
    </citation>
    <scope>NUCLEOTIDE SEQUENCE [LARGE SCALE GENOMIC DNA]</scope>
    <source>
        <strain>cv. Columbia</strain>
    </source>
</reference>
<reference key="3">
    <citation type="journal article" date="2017" name="Plant J.">
        <title>Araport11: a complete reannotation of the Arabidopsis thaliana reference genome.</title>
        <authorList>
            <person name="Cheng C.Y."/>
            <person name="Krishnakumar V."/>
            <person name="Chan A.P."/>
            <person name="Thibaud-Nissen F."/>
            <person name="Schobel S."/>
            <person name="Town C.D."/>
        </authorList>
    </citation>
    <scope>GENOME REANNOTATION</scope>
    <source>
        <strain>cv. Columbia</strain>
    </source>
</reference>
<reference key="4">
    <citation type="submission" date="2002-03" db="EMBL/GenBank/DDBJ databases">
        <title>Full-length cDNA from Arabidopsis thaliana.</title>
        <authorList>
            <person name="Brover V.V."/>
            <person name="Troukhan M.E."/>
            <person name="Alexandrov N.A."/>
            <person name="Lu Y.-P."/>
            <person name="Flavell R.B."/>
            <person name="Feldmann K.A."/>
        </authorList>
    </citation>
    <scope>NUCLEOTIDE SEQUENCE [LARGE SCALE MRNA] (ISOFORM 1)</scope>
</reference>
<reference key="5">
    <citation type="journal article" date="2003" name="Science">
        <title>Empirical analysis of transcriptional activity in the Arabidopsis genome.</title>
        <authorList>
            <person name="Yamada K."/>
            <person name="Lim J."/>
            <person name="Dale J.M."/>
            <person name="Chen H."/>
            <person name="Shinn P."/>
            <person name="Palm C.J."/>
            <person name="Southwick A.M."/>
            <person name="Wu H.C."/>
            <person name="Kim C.J."/>
            <person name="Nguyen M."/>
            <person name="Pham P.K."/>
            <person name="Cheuk R.F."/>
            <person name="Karlin-Newmann G."/>
            <person name="Liu S.X."/>
            <person name="Lam B."/>
            <person name="Sakano H."/>
            <person name="Wu T."/>
            <person name="Yu G."/>
            <person name="Miranda M."/>
            <person name="Quach H.L."/>
            <person name="Tripp M."/>
            <person name="Chang C.H."/>
            <person name="Lee J.M."/>
            <person name="Toriumi M.J."/>
            <person name="Chan M.M."/>
            <person name="Tang C.C."/>
            <person name="Onodera C.S."/>
            <person name="Deng J.M."/>
            <person name="Akiyama K."/>
            <person name="Ansari Y."/>
            <person name="Arakawa T."/>
            <person name="Banh J."/>
            <person name="Banno F."/>
            <person name="Bowser L."/>
            <person name="Brooks S.Y."/>
            <person name="Carninci P."/>
            <person name="Chao Q."/>
            <person name="Choy N."/>
            <person name="Enju A."/>
            <person name="Goldsmith A.D."/>
            <person name="Gurjal M."/>
            <person name="Hansen N.F."/>
            <person name="Hayashizaki Y."/>
            <person name="Johnson-Hopson C."/>
            <person name="Hsuan V.W."/>
            <person name="Iida K."/>
            <person name="Karnes M."/>
            <person name="Khan S."/>
            <person name="Koesema E."/>
            <person name="Ishida J."/>
            <person name="Jiang P.X."/>
            <person name="Jones T."/>
            <person name="Kawai J."/>
            <person name="Kamiya A."/>
            <person name="Meyers C."/>
            <person name="Nakajima M."/>
            <person name="Narusaka M."/>
            <person name="Seki M."/>
            <person name="Sakurai T."/>
            <person name="Satou M."/>
            <person name="Tamse R."/>
            <person name="Vaysberg M."/>
            <person name="Wallender E.K."/>
            <person name="Wong C."/>
            <person name="Yamamura Y."/>
            <person name="Yuan S."/>
            <person name="Shinozaki K."/>
            <person name="Davis R.W."/>
            <person name="Theologis A."/>
            <person name="Ecker J.R."/>
        </authorList>
    </citation>
    <scope>NUCLEOTIDE SEQUENCE [LARGE SCALE MRNA] OF 281-375 (ISOFORM 1)</scope>
    <source>
        <strain>cv. Columbia</strain>
    </source>
</reference>
<reference key="6">
    <citation type="journal article" date="2004" name="Genome Res.">
        <title>Whole genome sequence comparisons and 'full-length' cDNA sequences: a combined approach to evaluate and improve Arabidopsis genome annotation.</title>
        <authorList>
            <person name="Castelli V."/>
            <person name="Aury J.-M."/>
            <person name="Jaillon O."/>
            <person name="Wincker P."/>
            <person name="Clepet C."/>
            <person name="Menard M."/>
            <person name="Cruaud C."/>
            <person name="Quetier F."/>
            <person name="Scarpelli C."/>
            <person name="Schaechter V."/>
            <person name="Temple G."/>
            <person name="Caboche M."/>
            <person name="Weissenbach J."/>
            <person name="Salanoubat M."/>
        </authorList>
    </citation>
    <scope>NUCLEOTIDE SEQUENCE [LARGE SCALE MRNA] (ISOFORM 3)</scope>
    <source>
        <strain>cv. Columbia</strain>
    </source>
</reference>
<reference key="7">
    <citation type="journal article" date="2008" name="BMC Genomics">
        <title>Genome-wide analysis of CCCH zinc finger family in Arabidopsis and rice.</title>
        <authorList>
            <person name="Wang D."/>
            <person name="Guo Y."/>
            <person name="Wu C."/>
            <person name="Yang G."/>
            <person name="Li Y."/>
            <person name="Zheng C."/>
        </authorList>
    </citation>
    <scope>NOMENCLATURE</scope>
</reference>
<comment type="subcellular location">
    <subcellularLocation>
        <location evidence="1">Nucleus</location>
    </subcellularLocation>
</comment>
<comment type="alternative products">
    <event type="alternative splicing"/>
    <isoform>
        <id>Q8L7N8-1</id>
        <name>1</name>
        <sequence type="displayed"/>
    </isoform>
    <isoform>
        <id>Q8L7N8-2</id>
        <name>2</name>
        <sequence type="described" ref="VSP_013558"/>
    </isoform>
    <isoform>
        <id>Q8L7N8-3</id>
        <name>3</name>
        <sequence type="described" ref="VSP_037122"/>
    </isoform>
</comment>
<comment type="miscellaneous">
    <molecule>Isoform 2</molecule>
    <text evidence="6">May be due to a competing donor splice site.</text>
</comment>
<comment type="miscellaneous">
    <molecule>Isoform 3</molecule>
    <text evidence="6">May be due to intron retention.</text>
</comment>
<comment type="sequence caution" evidence="6">
    <conflict type="erroneous initiation">
        <sequence resource="EMBL-CDS" id="AAM61197"/>
    </conflict>
</comment>
<sequence>MDFDSISRESTFLSPLLNQNAMWQMNLGSDDTMGVDGSYPERHGEPDCAYYIRTGLCRFGSTCRFNHPHDRKLVIATARIKGEYPERIGQPECEFYLKTGTCKFGVTCKFHHPRNKAGIDGSVSVNVLSYPLRPNEDDCSYFLRIGQCKFGGTCKFNHPQTQSTNLMVSVRGSPVYSALQSLTGQPSYSWSRTSFVANPPRLQDPSGFASGSQGGLFSSGFHSGNSVPLGFYALPRENVFPERPGQPECQFYMKTGDCKFGTVCKFHHPRDRQTPPPDCVLSSVGLPLRPGEPLCVFYSRYGICKFGPSCKFDHPMRVFTYNNNTASPSPSSSLHQETAITTELRNLLVSSSVEAKPTSLPETTSAKDTIVDAQH</sequence>
<proteinExistence type="evidence at transcript level"/>